<reference key="1">
    <citation type="journal article" date="2007" name="Plant Biotechnol. J.">
        <title>The complete nucleotide sequence of the coffee (Coffea arabica L.) chloroplast genome: organization and implications for biotechnology and phylogenetic relationships amongst angiosperms.</title>
        <authorList>
            <person name="Samson N."/>
            <person name="Bausher M.G."/>
            <person name="Lee S.-B."/>
            <person name="Jansen R.K."/>
            <person name="Daniell H."/>
        </authorList>
    </citation>
    <scope>NUCLEOTIDE SEQUENCE [LARGE SCALE GENOMIC DNA]</scope>
</reference>
<keyword id="KW-0150">Chloroplast</keyword>
<keyword id="KW-0249">Electron transport</keyword>
<keyword id="KW-0472">Membrane</keyword>
<keyword id="KW-0602">Photosynthesis</keyword>
<keyword id="KW-0934">Plastid</keyword>
<keyword id="KW-1185">Reference proteome</keyword>
<keyword id="KW-0793">Thylakoid</keyword>
<keyword id="KW-0812">Transmembrane</keyword>
<keyword id="KW-1133">Transmembrane helix</keyword>
<keyword id="KW-0813">Transport</keyword>
<gene>
    <name evidence="2" type="primary">petD</name>
</gene>
<proteinExistence type="inferred from homology"/>
<name>PETD_COFAR</name>
<evidence type="ECO:0000250" key="1"/>
<evidence type="ECO:0000255" key="2">
    <source>
        <dbReference type="HAMAP-Rule" id="MF_01344"/>
    </source>
</evidence>
<sequence length="160" mass="17445">MGVTKKPDLNDPVLRAKLAKGMGHNYYGEPAWPNDLLYIFPVVILGTIACNVGLAVLEPSMVGEPADPFATPLEILPEWYFFPVFQILRTVPNKLLGVLLMVSVPAGLLTVPFLENVNKFQNPFRRPVATTVFLIGTAVALWLGIGATLPIDKSLTLGLF</sequence>
<comment type="function">
    <text evidence="2">Component of the cytochrome b6-f complex, which mediates electron transfer between photosystem II (PSII) and photosystem I (PSI), cyclic electron flow around PSI, and state transitions.</text>
</comment>
<comment type="subunit">
    <text evidence="1">The 4 large subunits of the cytochrome b6-f complex are cytochrome b6, subunit IV (17 kDa polypeptide, petD), cytochrome f and the Rieske protein, while the 4 small subunits are petG, petL, petM and petN. The complex functions as a dimer (By similarity).</text>
</comment>
<comment type="subcellular location">
    <subcellularLocation>
        <location evidence="2">Plastid</location>
        <location evidence="2">Chloroplast thylakoid membrane</location>
        <topology evidence="2">Multi-pass membrane protein</topology>
    </subcellularLocation>
</comment>
<comment type="similarity">
    <text evidence="2">Belongs to the cytochrome b family. PetD subfamily.</text>
</comment>
<geneLocation type="chloroplast"/>
<organism>
    <name type="scientific">Coffea arabica</name>
    <name type="common">Arabian coffee</name>
    <dbReference type="NCBI Taxonomy" id="13443"/>
    <lineage>
        <taxon>Eukaryota</taxon>
        <taxon>Viridiplantae</taxon>
        <taxon>Streptophyta</taxon>
        <taxon>Embryophyta</taxon>
        <taxon>Tracheophyta</taxon>
        <taxon>Spermatophyta</taxon>
        <taxon>Magnoliopsida</taxon>
        <taxon>eudicotyledons</taxon>
        <taxon>Gunneridae</taxon>
        <taxon>Pentapetalae</taxon>
        <taxon>asterids</taxon>
        <taxon>lamiids</taxon>
        <taxon>Gentianales</taxon>
        <taxon>Rubiaceae</taxon>
        <taxon>Ixoroideae</taxon>
        <taxon>Gardenieae complex</taxon>
        <taxon>Bertiereae - Coffeeae clade</taxon>
        <taxon>Coffeeae</taxon>
        <taxon>Coffea</taxon>
    </lineage>
</organism>
<feature type="chain" id="PRO_0000276535" description="Cytochrome b6-f complex subunit 4">
    <location>
        <begin position="1"/>
        <end position="160"/>
    </location>
</feature>
<feature type="transmembrane region" description="Helical" evidence="2">
    <location>
        <begin position="36"/>
        <end position="56"/>
    </location>
</feature>
<feature type="transmembrane region" description="Helical" evidence="2">
    <location>
        <begin position="95"/>
        <end position="115"/>
    </location>
</feature>
<feature type="transmembrane region" description="Helical" evidence="2">
    <location>
        <begin position="131"/>
        <end position="151"/>
    </location>
</feature>
<protein>
    <recommendedName>
        <fullName evidence="2">Cytochrome b6-f complex subunit 4</fullName>
    </recommendedName>
    <alternativeName>
        <fullName evidence="2">17 kDa polypeptide</fullName>
    </alternativeName>
</protein>
<accession>A0A366</accession>
<dbReference type="EMBL" id="EF044213">
    <property type="protein sequence ID" value="ABJ89709.1"/>
    <property type="molecule type" value="Genomic_DNA"/>
</dbReference>
<dbReference type="RefSeq" id="YP_817513.1">
    <property type="nucleotide sequence ID" value="NC_008535.1"/>
</dbReference>
<dbReference type="SMR" id="A0A366"/>
<dbReference type="GeneID" id="4421759"/>
<dbReference type="OrthoDB" id="244at2759"/>
<dbReference type="Proteomes" id="UP000515148">
    <property type="component" value="Chloroplast Pltd"/>
</dbReference>
<dbReference type="GO" id="GO:0009535">
    <property type="term" value="C:chloroplast thylakoid membrane"/>
    <property type="evidence" value="ECO:0007669"/>
    <property type="project" value="UniProtKB-SubCell"/>
</dbReference>
<dbReference type="GO" id="GO:0045158">
    <property type="term" value="F:electron transporter, transferring electrons within cytochrome b6/f complex of photosystem II activity"/>
    <property type="evidence" value="ECO:0007669"/>
    <property type="project" value="UniProtKB-UniRule"/>
</dbReference>
<dbReference type="GO" id="GO:0045156">
    <property type="term" value="F:electron transporter, transferring electrons within the cyclic electron transport pathway of photosynthesis activity"/>
    <property type="evidence" value="ECO:0007669"/>
    <property type="project" value="InterPro"/>
</dbReference>
<dbReference type="GO" id="GO:0016491">
    <property type="term" value="F:oxidoreductase activity"/>
    <property type="evidence" value="ECO:0007669"/>
    <property type="project" value="InterPro"/>
</dbReference>
<dbReference type="GO" id="GO:0009767">
    <property type="term" value="P:photosynthetic electron transport chain"/>
    <property type="evidence" value="ECO:0007669"/>
    <property type="project" value="InterPro"/>
</dbReference>
<dbReference type="CDD" id="cd00290">
    <property type="entry name" value="cytochrome_b_C"/>
    <property type="match status" value="1"/>
</dbReference>
<dbReference type="FunFam" id="1.10.287.980:FF:000001">
    <property type="entry name" value="Cytochrome b6-f complex subunit 4"/>
    <property type="match status" value="1"/>
</dbReference>
<dbReference type="FunFam" id="1.20.5.510:FF:000002">
    <property type="entry name" value="Cytochrome b6-f complex subunit 4"/>
    <property type="match status" value="1"/>
</dbReference>
<dbReference type="Gene3D" id="1.10.287.980">
    <property type="entry name" value="plastocyanin oxidoreductase"/>
    <property type="match status" value="1"/>
</dbReference>
<dbReference type="Gene3D" id="1.20.5.510">
    <property type="entry name" value="Single helix bin"/>
    <property type="match status" value="1"/>
</dbReference>
<dbReference type="HAMAP" id="MF_01344">
    <property type="entry name" value="Cytb6_f_subIV"/>
    <property type="match status" value="1"/>
</dbReference>
<dbReference type="InterPro" id="IPR005798">
    <property type="entry name" value="Cyt_b/b6_C"/>
</dbReference>
<dbReference type="InterPro" id="IPR036150">
    <property type="entry name" value="Cyt_b/b6_C_sf"/>
</dbReference>
<dbReference type="InterPro" id="IPR005870">
    <property type="entry name" value="Cyt_b6/f_cplx_suIV"/>
</dbReference>
<dbReference type="InterPro" id="IPR048260">
    <property type="entry name" value="Cytochrome_b_C_euk/bac"/>
</dbReference>
<dbReference type="NCBIfam" id="TIGR01156">
    <property type="entry name" value="cytb6_f_IV"/>
    <property type="match status" value="1"/>
</dbReference>
<dbReference type="PANTHER" id="PTHR19271">
    <property type="entry name" value="CYTOCHROME B"/>
    <property type="match status" value="1"/>
</dbReference>
<dbReference type="PANTHER" id="PTHR19271:SF16">
    <property type="entry name" value="CYTOCHROME B"/>
    <property type="match status" value="1"/>
</dbReference>
<dbReference type="Pfam" id="PF00032">
    <property type="entry name" value="Cytochrom_B_C"/>
    <property type="match status" value="1"/>
</dbReference>
<dbReference type="PIRSF" id="PIRSF000033">
    <property type="entry name" value="B6f_17K"/>
    <property type="match status" value="1"/>
</dbReference>
<dbReference type="SUPFAM" id="SSF81648">
    <property type="entry name" value="a domain/subunit of cytochrome bc1 complex (Ubiquinol-cytochrome c reductase)"/>
    <property type="match status" value="1"/>
</dbReference>
<dbReference type="PROSITE" id="PS51003">
    <property type="entry name" value="CYTB_CTER"/>
    <property type="match status" value="1"/>
</dbReference>